<name>PGMP1_MARPO</name>
<organism>
    <name type="scientific">Marchantia polymorpha</name>
    <name type="common">Common liverwort</name>
    <name type="synonym">Marchantia aquatica</name>
    <dbReference type="NCBI Taxonomy" id="3197"/>
    <lineage>
        <taxon>Eukaryota</taxon>
        <taxon>Viridiplantae</taxon>
        <taxon>Streptophyta</taxon>
        <taxon>Embryophyta</taxon>
        <taxon>Marchantiophyta</taxon>
        <taxon>Marchantiopsida</taxon>
        <taxon>Marchantiidae</taxon>
        <taxon>Marchantiales</taxon>
        <taxon>Marchantiaceae</taxon>
        <taxon>Marchantia</taxon>
    </lineage>
</organism>
<accession>A0A2R6W0K6</accession>
<comment type="function">
    <text evidence="2 3 5">Catalyzes the reversible isomerization of alpha-D-glucose 1-phosphate to alpha-D-glucose 6-phosphate (By similarity). The mechanism proceeds via the intermediate compound alpha-D-glucose 1,6-bisphosphate (By similarity). This enzyme participates in both the breakdown and synthesis of glucose (By similarity). Required for sucrose production and accumulation necessary during plant development (PubMed:31851335). Promotes gravitropic responses, negative in shoots but positive in roots, by facilitating starch granules (statoliths) formation (By similarity).</text>
</comment>
<comment type="catalytic activity">
    <reaction evidence="3">
        <text>alpha-D-glucose 1-phosphate = alpha-D-glucose 6-phosphate</text>
        <dbReference type="Rhea" id="RHEA:23536"/>
        <dbReference type="ChEBI" id="CHEBI:58225"/>
        <dbReference type="ChEBI" id="CHEBI:58601"/>
        <dbReference type="EC" id="5.4.2.2"/>
    </reaction>
</comment>
<comment type="catalytic activity">
    <reaction evidence="3">
        <text>O-phospho-L-seryl-[protein] + alpha-D-glucose 1-phosphate = alpha-D-glucose 1,6-bisphosphate + L-seryl-[protein]</text>
        <dbReference type="Rhea" id="RHEA:68748"/>
        <dbReference type="Rhea" id="RHEA-COMP:9863"/>
        <dbReference type="Rhea" id="RHEA-COMP:11604"/>
        <dbReference type="ChEBI" id="CHEBI:29999"/>
        <dbReference type="ChEBI" id="CHEBI:58392"/>
        <dbReference type="ChEBI" id="CHEBI:58601"/>
        <dbReference type="ChEBI" id="CHEBI:83421"/>
    </reaction>
</comment>
<comment type="catalytic activity">
    <reaction evidence="3">
        <text>alpha-D-glucose 1,6-bisphosphate + L-seryl-[protein] = O-phospho-L-seryl-[protein] + alpha-D-glucose 6-phosphate</text>
        <dbReference type="Rhea" id="RHEA:68752"/>
        <dbReference type="Rhea" id="RHEA-COMP:9863"/>
        <dbReference type="Rhea" id="RHEA-COMP:11604"/>
        <dbReference type="ChEBI" id="CHEBI:29999"/>
        <dbReference type="ChEBI" id="CHEBI:58225"/>
        <dbReference type="ChEBI" id="CHEBI:58392"/>
        <dbReference type="ChEBI" id="CHEBI:83421"/>
    </reaction>
</comment>
<comment type="cofactor">
    <cofactor evidence="1">
        <name>Mg(2+)</name>
        <dbReference type="ChEBI" id="CHEBI:18420"/>
    </cofactor>
    <text evidence="1">Binds 1 Mg(2+) ion per subunit.</text>
</comment>
<comment type="activity regulation">
    <text evidence="3">Inhibited by the Calvin cycle intermediates fructose-1,6-bisphosphate and ribulose-1,5-bisphosphate.</text>
</comment>
<comment type="subcellular location">
    <subcellularLocation>
        <location evidence="4">Plastid</location>
        <location evidence="4">Chloroplast</location>
    </subcellularLocation>
</comment>
<comment type="disruption phenotype">
    <text evidence="5">Suppressed starch accumulation observed in plants lacking also PRAF, but no complementation of the slow growth phenotype associated with low sucrose levels (PubMed:31851335). The double mutant missing both PRAF and PPGM1 displays a disturbed photosynthetic electron transport (PubMed:31851335).</text>
</comment>
<comment type="similarity">
    <text evidence="7">Belongs to the phosphohexose mutase family.</text>
</comment>
<evidence type="ECO:0000250" key="1">
    <source>
        <dbReference type="UniProtKB" id="P00949"/>
    </source>
</evidence>
<evidence type="ECO:0000250" key="2">
    <source>
        <dbReference type="UniProtKB" id="P36871"/>
    </source>
</evidence>
<evidence type="ECO:0000250" key="3">
    <source>
        <dbReference type="UniProtKB" id="Q9SCY0"/>
    </source>
</evidence>
<evidence type="ECO:0000255" key="4"/>
<evidence type="ECO:0000269" key="5">
    <source>
    </source>
</evidence>
<evidence type="ECO:0000303" key="6">
    <source>
    </source>
</evidence>
<evidence type="ECO:0000305" key="7"/>
<evidence type="ECO:0000312" key="8">
    <source>
        <dbReference type="EMBL" id="PTQ27387.1"/>
    </source>
</evidence>
<dbReference type="EC" id="5.4.2.2" evidence="3"/>
<dbReference type="EMBL" id="KZ772870">
    <property type="protein sequence ID" value="PTQ27387.1"/>
    <property type="molecule type" value="Genomic_DNA"/>
</dbReference>
<dbReference type="SMR" id="A0A2R6W0K6"/>
<dbReference type="EnsemblPlants" id="Mp4g13750.1">
    <property type="protein sequence ID" value="Mp4g13750.1.cds"/>
    <property type="gene ID" value="Mp4g13750"/>
</dbReference>
<dbReference type="Gramene" id="Mp4g13750.1">
    <property type="protein sequence ID" value="Mp4g13750.1.cds"/>
    <property type="gene ID" value="Mp4g13750"/>
</dbReference>
<dbReference type="OMA" id="YIPDYAG"/>
<dbReference type="OrthoDB" id="2291at2759"/>
<dbReference type="Proteomes" id="UP000244005">
    <property type="component" value="Unassembled WGS sequence"/>
</dbReference>
<dbReference type="GO" id="GO:0009570">
    <property type="term" value="C:chloroplast stroma"/>
    <property type="evidence" value="ECO:0007669"/>
    <property type="project" value="EnsemblPlants"/>
</dbReference>
<dbReference type="GO" id="GO:0005829">
    <property type="term" value="C:cytosol"/>
    <property type="evidence" value="ECO:0000318"/>
    <property type="project" value="GO_Central"/>
</dbReference>
<dbReference type="GO" id="GO:0010319">
    <property type="term" value="C:stromule"/>
    <property type="evidence" value="ECO:0007669"/>
    <property type="project" value="EnsemblPlants"/>
</dbReference>
<dbReference type="GO" id="GO:0000287">
    <property type="term" value="F:magnesium ion binding"/>
    <property type="evidence" value="ECO:0007669"/>
    <property type="project" value="InterPro"/>
</dbReference>
<dbReference type="GO" id="GO:0004614">
    <property type="term" value="F:phosphoglucomutase activity"/>
    <property type="evidence" value="ECO:0000318"/>
    <property type="project" value="GO_Central"/>
</dbReference>
<dbReference type="GO" id="GO:0005975">
    <property type="term" value="P:carbohydrate metabolic process"/>
    <property type="evidence" value="ECO:0000318"/>
    <property type="project" value="GO_Central"/>
</dbReference>
<dbReference type="GO" id="GO:0009590">
    <property type="term" value="P:detection of gravity"/>
    <property type="evidence" value="ECO:0007669"/>
    <property type="project" value="EnsemblPlants"/>
</dbReference>
<dbReference type="GO" id="GO:0006006">
    <property type="term" value="P:glucose metabolic process"/>
    <property type="evidence" value="ECO:0007669"/>
    <property type="project" value="UniProtKB-KW"/>
</dbReference>
<dbReference type="GO" id="GO:0009409">
    <property type="term" value="P:response to cold"/>
    <property type="evidence" value="ECO:0007669"/>
    <property type="project" value="EnsemblPlants"/>
</dbReference>
<dbReference type="GO" id="GO:0019252">
    <property type="term" value="P:starch biosynthetic process"/>
    <property type="evidence" value="ECO:0007669"/>
    <property type="project" value="EnsemblPlants"/>
</dbReference>
<dbReference type="GO" id="GO:0005986">
    <property type="term" value="P:sucrose biosynthetic process"/>
    <property type="evidence" value="ECO:0000315"/>
    <property type="project" value="UniProtKB"/>
</dbReference>
<dbReference type="CDD" id="cd03085">
    <property type="entry name" value="PGM1"/>
    <property type="match status" value="1"/>
</dbReference>
<dbReference type="FunFam" id="3.30.310.50:FF:000002">
    <property type="entry name" value="Phosphoglucomutase 5"/>
    <property type="match status" value="1"/>
</dbReference>
<dbReference type="FunFam" id="3.40.120.10:FF:000004">
    <property type="entry name" value="Phosphoglucomutase 5"/>
    <property type="match status" value="1"/>
</dbReference>
<dbReference type="FunFam" id="3.40.120.10:FF:000005">
    <property type="entry name" value="Phosphoglucomutase 5"/>
    <property type="match status" value="1"/>
</dbReference>
<dbReference type="FunFam" id="3.40.120.10:FF:000009">
    <property type="entry name" value="Phosphoglucomutase, cytoplasmic 1"/>
    <property type="match status" value="1"/>
</dbReference>
<dbReference type="Gene3D" id="3.40.120.10">
    <property type="entry name" value="Alpha-D-Glucose-1,6-Bisphosphate, subunit A, domain 3"/>
    <property type="match status" value="3"/>
</dbReference>
<dbReference type="Gene3D" id="3.30.310.50">
    <property type="entry name" value="Alpha-D-phosphohexomutase, C-terminal domain"/>
    <property type="match status" value="1"/>
</dbReference>
<dbReference type="InterPro" id="IPR005844">
    <property type="entry name" value="A-D-PHexomutase_a/b/a-I"/>
</dbReference>
<dbReference type="InterPro" id="IPR016055">
    <property type="entry name" value="A-D-PHexomutase_a/b/a-I/II/III"/>
</dbReference>
<dbReference type="InterPro" id="IPR005845">
    <property type="entry name" value="A-D-PHexomutase_a/b/a-II"/>
</dbReference>
<dbReference type="InterPro" id="IPR005846">
    <property type="entry name" value="A-D-PHexomutase_a/b/a-III"/>
</dbReference>
<dbReference type="InterPro" id="IPR036900">
    <property type="entry name" value="A-D-PHexomutase_C_sf"/>
</dbReference>
<dbReference type="InterPro" id="IPR016066">
    <property type="entry name" value="A-D-PHexomutase_CS"/>
</dbReference>
<dbReference type="InterPro" id="IPR005841">
    <property type="entry name" value="Alpha-D-phosphohexomutase_SF"/>
</dbReference>
<dbReference type="InterPro" id="IPR045244">
    <property type="entry name" value="PGM"/>
</dbReference>
<dbReference type="NCBIfam" id="NF005737">
    <property type="entry name" value="PRK07564.1-1"/>
    <property type="match status" value="1"/>
</dbReference>
<dbReference type="PANTHER" id="PTHR22573:SF59">
    <property type="entry name" value="PHOSPHOGLUCOMUTASE, CHLOROPLASTIC"/>
    <property type="match status" value="1"/>
</dbReference>
<dbReference type="PANTHER" id="PTHR22573">
    <property type="entry name" value="PHOSPHOHEXOMUTASE FAMILY MEMBER"/>
    <property type="match status" value="1"/>
</dbReference>
<dbReference type="Pfam" id="PF24947">
    <property type="entry name" value="PGM1_C_vert_fung"/>
    <property type="match status" value="1"/>
</dbReference>
<dbReference type="Pfam" id="PF02878">
    <property type="entry name" value="PGM_PMM_I"/>
    <property type="match status" value="1"/>
</dbReference>
<dbReference type="Pfam" id="PF02879">
    <property type="entry name" value="PGM_PMM_II"/>
    <property type="match status" value="1"/>
</dbReference>
<dbReference type="Pfam" id="PF02880">
    <property type="entry name" value="PGM_PMM_III"/>
    <property type="match status" value="1"/>
</dbReference>
<dbReference type="PRINTS" id="PR00509">
    <property type="entry name" value="PGMPMM"/>
</dbReference>
<dbReference type="SUPFAM" id="SSF55957">
    <property type="entry name" value="Phosphoglucomutase, C-terminal domain"/>
    <property type="match status" value="1"/>
</dbReference>
<dbReference type="SUPFAM" id="SSF53738">
    <property type="entry name" value="Phosphoglucomutase, first 3 domains"/>
    <property type="match status" value="3"/>
</dbReference>
<dbReference type="PROSITE" id="PS00710">
    <property type="entry name" value="PGM_PMM"/>
    <property type="match status" value="1"/>
</dbReference>
<keyword id="KW-0119">Carbohydrate metabolism</keyword>
<keyword id="KW-0150">Chloroplast</keyword>
<keyword id="KW-0313">Glucose metabolism</keyword>
<keyword id="KW-0413">Isomerase</keyword>
<keyword id="KW-0460">Magnesium</keyword>
<keyword id="KW-0479">Metal-binding</keyword>
<keyword id="KW-0597">Phosphoprotein</keyword>
<keyword id="KW-0934">Plastid</keyword>
<keyword id="KW-1185">Reference proteome</keyword>
<keyword id="KW-0809">Transit peptide</keyword>
<reference key="1">
    <citation type="journal article" date="2017" name="Cell">
        <title>Insights into land plant evolution garnered from the Marchantia polymorpha genome.</title>
        <authorList>
            <person name="Bowman J.L."/>
            <person name="Kohchi T."/>
            <person name="Yamato K.T."/>
            <person name="Jenkins J."/>
            <person name="Shu S."/>
            <person name="Ishizaki K."/>
            <person name="Yamaoka S."/>
            <person name="Nishihama R."/>
            <person name="Nakamura Y."/>
            <person name="Berger F."/>
            <person name="Adam C."/>
            <person name="Aki S.S."/>
            <person name="Althoff F."/>
            <person name="Araki T."/>
            <person name="Arteaga-Vazquez M.A."/>
            <person name="Balasubrmanian S."/>
            <person name="Barry K."/>
            <person name="Bauer D."/>
            <person name="Boehm C.R."/>
            <person name="Briginshaw L."/>
            <person name="Caballero-Perez J."/>
            <person name="Catarino B."/>
            <person name="Chen F."/>
            <person name="Chiyoda S."/>
            <person name="Chovatia M."/>
            <person name="Davies K.M."/>
            <person name="Delmans M."/>
            <person name="Demura T."/>
            <person name="Dierschke T."/>
            <person name="Dolan L."/>
            <person name="Dorantes-Acosta A.E."/>
            <person name="Eklund D.M."/>
            <person name="Florent S.N."/>
            <person name="Flores-Sandoval E."/>
            <person name="Fujiyama A."/>
            <person name="Fukuzawa H."/>
            <person name="Galik B."/>
            <person name="Grimanelli D."/>
            <person name="Grimwood J."/>
            <person name="Grossniklaus U."/>
            <person name="Hamada T."/>
            <person name="Haseloff J."/>
            <person name="Hetherington A.J."/>
            <person name="Higo A."/>
            <person name="Hirakawa Y."/>
            <person name="Hundley H.N."/>
            <person name="Ikeda Y."/>
            <person name="Inoue K."/>
            <person name="Inoue S.I."/>
            <person name="Ishida S."/>
            <person name="Jia Q."/>
            <person name="Kakita M."/>
            <person name="Kanazawa T."/>
            <person name="Kawai Y."/>
            <person name="Kawashima T."/>
            <person name="Kennedy M."/>
            <person name="Kinose K."/>
            <person name="Kinoshita T."/>
            <person name="Kohara Y."/>
            <person name="Koide E."/>
            <person name="Komatsu K."/>
            <person name="Kopischke S."/>
            <person name="Kubo M."/>
            <person name="Kyozuka J."/>
            <person name="Lagercrantz U."/>
            <person name="Lin S.S."/>
            <person name="Lindquist E."/>
            <person name="Lipzen A.M."/>
            <person name="Lu C.W."/>
            <person name="De Luna E."/>
            <person name="Martienssen R.A."/>
            <person name="Minamino N."/>
            <person name="Mizutani M."/>
            <person name="Mizutani M."/>
            <person name="Mochizuki N."/>
            <person name="Monte I."/>
            <person name="Mosher R."/>
            <person name="Nagasaki H."/>
            <person name="Nakagami H."/>
            <person name="Naramoto S."/>
            <person name="Nishitani K."/>
            <person name="Ohtani M."/>
            <person name="Okamoto T."/>
            <person name="Okumura M."/>
            <person name="Phillips J."/>
            <person name="Pollak B."/>
            <person name="Reinders A."/>
            <person name="Rovekamp M."/>
            <person name="Sano R."/>
            <person name="Sawa S."/>
            <person name="Schmid M.W."/>
            <person name="Shirakawa M."/>
            <person name="Solano R."/>
            <person name="Spunde A."/>
            <person name="Suetsugu N."/>
            <person name="Sugano S."/>
            <person name="Sugiyama A."/>
            <person name="Sun R."/>
            <person name="Suzuki Y."/>
            <person name="Takenaka M."/>
            <person name="Takezawa D."/>
            <person name="Tomogane H."/>
            <person name="Tsuzuki M."/>
            <person name="Ueda T."/>
            <person name="Umeda M."/>
            <person name="Ward J.M."/>
            <person name="Watanabe Y."/>
            <person name="Yazaki K."/>
            <person name="Yokoyama R."/>
            <person name="Yoshitake Y."/>
            <person name="Yotsui I."/>
            <person name="Zachgo S."/>
            <person name="Schmutz J."/>
        </authorList>
    </citation>
    <scope>NUCLEOTIDE SEQUENCE [LARGE SCALE GENOMIC DNA]</scope>
    <source>
        <strain>Tak-1</strain>
    </source>
</reference>
<reference key="2">
    <citation type="journal article" date="2020" name="Plant Cell Physiol.">
        <title>Regulation of photosynthetic carbohydrate metabolism by a Raf-like kinase in the liverwort Marchantia polymorpha.</title>
        <authorList>
            <person name="Koide E."/>
            <person name="Suetsugu N."/>
            <person name="Iwano M."/>
            <person name="Gotoh E."/>
            <person name="Nomura Y."/>
            <person name="Stolze S.C."/>
            <person name="Nakagami H."/>
            <person name="Kohchi T."/>
            <person name="Nishihama R."/>
        </authorList>
    </citation>
    <scope>FUNCTION</scope>
    <scope>DISRUPTION PHENOTYPE</scope>
    <source>
        <strain>Tak-1</strain>
    </source>
</reference>
<sequence length="652" mass="69918">MAFSAAASASTNLVPAVASGRGGAAASASQHGETARLARFGVSSSACANALSLSSSRSCASMGEVLWANGGAVRLAARRTLRVRAAGAGTIVQPEGFQITSVPTTPIDGQKTGTSGLRKKVKEFQSPNYLANWIQALFDSLPAEDVKGSTLVLGGDGRYFNKEASQIIIKIAAGNGVGKILVGREGIASTPAVSAIIRARKANGGFVMSASHNPGGPKYDWGIKFNYSSGQPAPESITDKIYGNTLSIKEIKQADIPDVNLSELGVHKFGDFSVEVIDPVADYLNLLEEVFDFDLLKGLLTSKDFRFKFDAMHAVTGAYAKPIFVDRLGAPEDSIFNGVPLEDFGGGHPDPNLTYAEELVKIMYGTDAPDFGAASDGDGDRNMILGNHFFITPSDSVAMIAANADAIPYFKTGLKGLARSMPTSGALDRVAKELGLPFFETPTGWKFFGNLMDAGKCSVCGEESFGTGSDHVREKDGIWAVLAWISIVAYKNRDRKVGEKLVTVADIAKEHWAKYGRNFFSRYDYEECESAGANKMVEHLRDIIAKSKKGDKYGNYELELADDFAYTDPIDGSVATKQGIRFIFSDGSRIIFRLSGTGSAGATIRIYVEQYEQDTTKHDLDAQDALKPLIDIALSVSKLQEFTGRTKPTVIT</sequence>
<gene>
    <name evidence="6" type="primary">PGM1</name>
    <name evidence="6" type="ordered locus">Mapoly0202s0014</name>
    <name evidence="8" type="ordered locus">MARPO_0202s0014</name>
</gene>
<protein>
    <recommendedName>
        <fullName evidence="6">Phosphoglucomutase 1, chloroplastic</fullName>
        <shortName evidence="6">MpPGM1</shortName>
        <ecNumber evidence="3">5.4.2.2</ecNumber>
    </recommendedName>
    <alternativeName>
        <fullName evidence="3">Glucose phosphomutase</fullName>
    </alternativeName>
</protein>
<feature type="transit peptide" description="Chloroplast" evidence="4">
    <location>
        <begin position="1"/>
        <end position="84"/>
    </location>
</feature>
<feature type="chain" id="PRO_0000460324" description="Phosphoglucomutase 1, chloroplastic">
    <location>
        <begin position="85"/>
        <end position="652"/>
    </location>
</feature>
<feature type="active site" description="Phosphoserine intermediate" evidence="1">
    <location>
        <position position="211"/>
    </location>
</feature>
<feature type="binding site" evidence="1">
    <location>
        <position position="118"/>
    </location>
    <ligand>
        <name>alpha-D-glucose 1,6-bisphosphate</name>
        <dbReference type="ChEBI" id="CHEBI:58392"/>
    </ligand>
</feature>
<feature type="binding site" evidence="1">
    <location>
        <position position="211"/>
    </location>
    <ligand>
        <name>alpha-D-glucose 1,6-bisphosphate</name>
        <dbReference type="ChEBI" id="CHEBI:58392"/>
    </ligand>
</feature>
<feature type="binding site" description="via phosphate group" evidence="1">
    <location>
        <position position="211"/>
    </location>
    <ligand>
        <name>Mg(2+)</name>
        <dbReference type="ChEBI" id="CHEBI:18420"/>
    </ligand>
</feature>
<feature type="binding site" evidence="1">
    <location>
        <position position="376"/>
    </location>
    <ligand>
        <name>Mg(2+)</name>
        <dbReference type="ChEBI" id="CHEBI:18420"/>
    </ligand>
</feature>
<feature type="binding site" evidence="1">
    <location>
        <position position="378"/>
    </location>
    <ligand>
        <name>Mg(2+)</name>
        <dbReference type="ChEBI" id="CHEBI:18420"/>
    </ligand>
</feature>
<feature type="binding site" evidence="1">
    <location>
        <position position="380"/>
    </location>
    <ligand>
        <name>alpha-D-glucose 1,6-bisphosphate</name>
        <dbReference type="ChEBI" id="CHEBI:58392"/>
    </ligand>
</feature>
<feature type="binding site" evidence="1">
    <location>
        <position position="380"/>
    </location>
    <ligand>
        <name>Mg(2+)</name>
        <dbReference type="ChEBI" id="CHEBI:18420"/>
    </ligand>
</feature>
<feature type="binding site" evidence="1">
    <location>
        <position position="381"/>
    </location>
    <ligand>
        <name>alpha-D-glucose 1,6-bisphosphate</name>
        <dbReference type="ChEBI" id="CHEBI:58392"/>
    </ligand>
</feature>
<feature type="binding site" evidence="1">
    <location>
        <position position="443"/>
    </location>
    <ligand>
        <name>alpha-D-glucose 1,6-bisphosphate</name>
        <dbReference type="ChEBI" id="CHEBI:58392"/>
    </ligand>
</feature>
<feature type="binding site" evidence="1">
    <location>
        <position position="462"/>
    </location>
    <ligand>
        <name>alpha-D-glucose 1,6-bisphosphate</name>
        <dbReference type="ChEBI" id="CHEBI:58392"/>
    </ligand>
</feature>
<feature type="binding site" evidence="1">
    <location>
        <position position="464"/>
    </location>
    <ligand>
        <name>alpha-D-glucose 1,6-bisphosphate</name>
        <dbReference type="ChEBI" id="CHEBI:58392"/>
    </ligand>
</feature>
<feature type="binding site" evidence="1">
    <location>
        <position position="475"/>
    </location>
    <ligand>
        <name>alpha-D-glucose 1,6-bisphosphate</name>
        <dbReference type="ChEBI" id="CHEBI:58392"/>
    </ligand>
</feature>
<feature type="modified residue" description="Phosphoserine" evidence="1">
    <location>
        <position position="211"/>
    </location>
</feature>
<proteinExistence type="inferred from homology"/>